<name>RLMF_ECO24</name>
<accession>A7ZJM2</accession>
<keyword id="KW-0963">Cytoplasm</keyword>
<keyword id="KW-0489">Methyltransferase</keyword>
<keyword id="KW-1185">Reference proteome</keyword>
<keyword id="KW-0698">rRNA processing</keyword>
<keyword id="KW-0949">S-adenosyl-L-methionine</keyword>
<keyword id="KW-0808">Transferase</keyword>
<sequence>MSAQKPGLHPRNRHHSRYDLATLCQVNPELRQFLTLTPAGEQSVDFANPLAVKALNKALLAHFYAVANWDIPDGFLCPPVPGRADYIHHLADLLAEASGTIPANASILDIGVGANCIYPLIGVHEYGWRFTGSETSSQALSSAQAIISANPGLNRAIRLRRQKESGAIFNGIIHKNEQYDATLCNPPFHDSAAAARAGSERKRRNLGLNKDDALNFGGQQQELWCEGGEVAFIKKMIEESKGFAKQVMWFTSLVSRGENLPPLYRALTDVGAVKVVKKEMAQGQKQSRFIAWTFMNDEQRRRFVNRQR</sequence>
<protein>
    <recommendedName>
        <fullName evidence="1">Ribosomal RNA large subunit methyltransferase F</fullName>
        <ecNumber evidence="1">2.1.1.181</ecNumber>
    </recommendedName>
    <alternativeName>
        <fullName evidence="1">23S rRNA mA1618 methyltransferase</fullName>
    </alternativeName>
    <alternativeName>
        <fullName evidence="1">rRNA adenine N-6-methyltransferase</fullName>
    </alternativeName>
</protein>
<proteinExistence type="inferred from homology"/>
<evidence type="ECO:0000255" key="1">
    <source>
        <dbReference type="HAMAP-Rule" id="MF_01848"/>
    </source>
</evidence>
<evidence type="ECO:0000305" key="2"/>
<dbReference type="EC" id="2.1.1.181" evidence="1"/>
<dbReference type="EMBL" id="CP000800">
    <property type="protein sequence ID" value="ABV17072.1"/>
    <property type="status" value="ALT_INIT"/>
    <property type="molecule type" value="Genomic_DNA"/>
</dbReference>
<dbReference type="RefSeq" id="WP_001275941.1">
    <property type="nucleotide sequence ID" value="NC_009801.1"/>
</dbReference>
<dbReference type="SMR" id="A7ZJM2"/>
<dbReference type="GeneID" id="93776621"/>
<dbReference type="KEGG" id="ecw:EcE24377A_0877"/>
<dbReference type="HOGENOM" id="CLU_027534_3_0_6"/>
<dbReference type="Proteomes" id="UP000001122">
    <property type="component" value="Chromosome"/>
</dbReference>
<dbReference type="GO" id="GO:0005737">
    <property type="term" value="C:cytoplasm"/>
    <property type="evidence" value="ECO:0007669"/>
    <property type="project" value="UniProtKB-SubCell"/>
</dbReference>
<dbReference type="GO" id="GO:0052907">
    <property type="term" value="F:23S rRNA (adenine(1618)-N(6))-methyltransferase activity"/>
    <property type="evidence" value="ECO:0007669"/>
    <property type="project" value="UniProtKB-EC"/>
</dbReference>
<dbReference type="GO" id="GO:0070475">
    <property type="term" value="P:rRNA base methylation"/>
    <property type="evidence" value="ECO:0007669"/>
    <property type="project" value="TreeGrafter"/>
</dbReference>
<dbReference type="FunFam" id="3.40.50.150:FF:000045">
    <property type="entry name" value="Ribosomal RNA large subunit methyltransferase F"/>
    <property type="match status" value="1"/>
</dbReference>
<dbReference type="Gene3D" id="3.40.50.150">
    <property type="entry name" value="Vaccinia Virus protein VP39"/>
    <property type="match status" value="1"/>
</dbReference>
<dbReference type="HAMAP" id="MF_01848">
    <property type="entry name" value="23SrRNA_methyltr_F"/>
    <property type="match status" value="1"/>
</dbReference>
<dbReference type="InterPro" id="IPR010286">
    <property type="entry name" value="METTL16/RlmF"/>
</dbReference>
<dbReference type="InterPro" id="IPR016909">
    <property type="entry name" value="rRNA_lsu_MeTfrase_F"/>
</dbReference>
<dbReference type="InterPro" id="IPR029063">
    <property type="entry name" value="SAM-dependent_MTases_sf"/>
</dbReference>
<dbReference type="NCBIfam" id="NF008725">
    <property type="entry name" value="PRK11727.1"/>
    <property type="match status" value="1"/>
</dbReference>
<dbReference type="PANTHER" id="PTHR13393:SF0">
    <property type="entry name" value="RNA N6-ADENOSINE-METHYLTRANSFERASE METTL16"/>
    <property type="match status" value="1"/>
</dbReference>
<dbReference type="PANTHER" id="PTHR13393">
    <property type="entry name" value="SAM-DEPENDENT METHYLTRANSFERASE"/>
    <property type="match status" value="1"/>
</dbReference>
<dbReference type="Pfam" id="PF05971">
    <property type="entry name" value="Methyltransf_10"/>
    <property type="match status" value="1"/>
</dbReference>
<dbReference type="PIRSF" id="PIRSF029038">
    <property type="entry name" value="Mtase_YbiN_prd"/>
    <property type="match status" value="1"/>
</dbReference>
<dbReference type="SUPFAM" id="SSF53335">
    <property type="entry name" value="S-adenosyl-L-methionine-dependent methyltransferases"/>
    <property type="match status" value="1"/>
</dbReference>
<feature type="chain" id="PRO_0000349910" description="Ribosomal RNA large subunit methyltransferase F">
    <location>
        <begin position="1"/>
        <end position="308"/>
    </location>
</feature>
<gene>
    <name evidence="1" type="primary">rlmF</name>
    <name type="ordered locus">EcE24377A_0877</name>
</gene>
<organism>
    <name type="scientific">Escherichia coli O139:H28 (strain E24377A / ETEC)</name>
    <dbReference type="NCBI Taxonomy" id="331111"/>
    <lineage>
        <taxon>Bacteria</taxon>
        <taxon>Pseudomonadati</taxon>
        <taxon>Pseudomonadota</taxon>
        <taxon>Gammaproteobacteria</taxon>
        <taxon>Enterobacterales</taxon>
        <taxon>Enterobacteriaceae</taxon>
        <taxon>Escherichia</taxon>
    </lineage>
</organism>
<reference key="1">
    <citation type="journal article" date="2008" name="J. Bacteriol.">
        <title>The pangenome structure of Escherichia coli: comparative genomic analysis of E. coli commensal and pathogenic isolates.</title>
        <authorList>
            <person name="Rasko D.A."/>
            <person name="Rosovitz M.J."/>
            <person name="Myers G.S.A."/>
            <person name="Mongodin E.F."/>
            <person name="Fricke W.F."/>
            <person name="Gajer P."/>
            <person name="Crabtree J."/>
            <person name="Sebaihia M."/>
            <person name="Thomson N.R."/>
            <person name="Chaudhuri R."/>
            <person name="Henderson I.R."/>
            <person name="Sperandio V."/>
            <person name="Ravel J."/>
        </authorList>
    </citation>
    <scope>NUCLEOTIDE SEQUENCE [LARGE SCALE GENOMIC DNA]</scope>
    <source>
        <strain>E24377A / ETEC</strain>
    </source>
</reference>
<comment type="function">
    <text evidence="1">Specifically methylates the adenine in position 1618 of 23S rRNA.</text>
</comment>
<comment type="catalytic activity">
    <reaction evidence="1">
        <text>adenosine(1618) in 23S rRNA + S-adenosyl-L-methionine = N(6)-methyladenosine(1618) in 23S rRNA + S-adenosyl-L-homocysteine + H(+)</text>
        <dbReference type="Rhea" id="RHEA:16497"/>
        <dbReference type="Rhea" id="RHEA-COMP:10229"/>
        <dbReference type="Rhea" id="RHEA-COMP:10231"/>
        <dbReference type="ChEBI" id="CHEBI:15378"/>
        <dbReference type="ChEBI" id="CHEBI:57856"/>
        <dbReference type="ChEBI" id="CHEBI:59789"/>
        <dbReference type="ChEBI" id="CHEBI:74411"/>
        <dbReference type="ChEBI" id="CHEBI:74449"/>
        <dbReference type="EC" id="2.1.1.181"/>
    </reaction>
</comment>
<comment type="subcellular location">
    <subcellularLocation>
        <location evidence="1">Cytoplasm</location>
    </subcellularLocation>
</comment>
<comment type="similarity">
    <text evidence="1">Belongs to the methyltransferase superfamily. METTL16/RlmF family.</text>
</comment>
<comment type="sequence caution" evidence="2">
    <conflict type="erroneous initiation">
        <sequence resource="EMBL-CDS" id="ABV17072"/>
    </conflict>
</comment>